<feature type="chain" id="PRO_1000215685" description="ADP-L-glycero-D-manno-heptose-6-epimerase">
    <location>
        <begin position="1"/>
        <end position="310"/>
    </location>
</feature>
<feature type="active site" description="Proton acceptor" evidence="1">
    <location>
        <position position="140"/>
    </location>
</feature>
<feature type="active site" description="Proton acceptor" evidence="1">
    <location>
        <position position="178"/>
    </location>
</feature>
<feature type="binding site" evidence="1">
    <location>
        <begin position="10"/>
        <end position="11"/>
    </location>
    <ligand>
        <name>NADP(+)</name>
        <dbReference type="ChEBI" id="CHEBI:58349"/>
    </ligand>
</feature>
<feature type="binding site" evidence="1">
    <location>
        <begin position="31"/>
        <end position="32"/>
    </location>
    <ligand>
        <name>NADP(+)</name>
        <dbReference type="ChEBI" id="CHEBI:58349"/>
    </ligand>
</feature>
<feature type="binding site" evidence="1">
    <location>
        <position position="38"/>
    </location>
    <ligand>
        <name>NADP(+)</name>
        <dbReference type="ChEBI" id="CHEBI:58349"/>
    </ligand>
</feature>
<feature type="binding site" evidence="1">
    <location>
        <position position="53"/>
    </location>
    <ligand>
        <name>NADP(+)</name>
        <dbReference type="ChEBI" id="CHEBI:58349"/>
    </ligand>
</feature>
<feature type="binding site" evidence="1">
    <location>
        <begin position="75"/>
        <end position="79"/>
    </location>
    <ligand>
        <name>NADP(+)</name>
        <dbReference type="ChEBI" id="CHEBI:58349"/>
    </ligand>
</feature>
<feature type="binding site" evidence="1">
    <location>
        <position position="92"/>
    </location>
    <ligand>
        <name>NADP(+)</name>
        <dbReference type="ChEBI" id="CHEBI:58349"/>
    </ligand>
</feature>
<feature type="binding site" evidence="1">
    <location>
        <position position="144"/>
    </location>
    <ligand>
        <name>NADP(+)</name>
        <dbReference type="ChEBI" id="CHEBI:58349"/>
    </ligand>
</feature>
<feature type="binding site" evidence="1">
    <location>
        <position position="169"/>
    </location>
    <ligand>
        <name>substrate</name>
    </ligand>
</feature>
<feature type="binding site" evidence="1">
    <location>
        <position position="170"/>
    </location>
    <ligand>
        <name>NADP(+)</name>
        <dbReference type="ChEBI" id="CHEBI:58349"/>
    </ligand>
</feature>
<feature type="binding site" evidence="1">
    <location>
        <position position="178"/>
    </location>
    <ligand>
        <name>NADP(+)</name>
        <dbReference type="ChEBI" id="CHEBI:58349"/>
    </ligand>
</feature>
<feature type="binding site" evidence="1">
    <location>
        <position position="180"/>
    </location>
    <ligand>
        <name>substrate</name>
    </ligand>
</feature>
<feature type="binding site" evidence="1">
    <location>
        <position position="187"/>
    </location>
    <ligand>
        <name>substrate</name>
    </ligand>
</feature>
<feature type="binding site" evidence="1">
    <location>
        <begin position="201"/>
        <end position="204"/>
    </location>
    <ligand>
        <name>substrate</name>
    </ligand>
</feature>
<feature type="binding site" evidence="1">
    <location>
        <position position="209"/>
    </location>
    <ligand>
        <name>substrate</name>
    </ligand>
</feature>
<feature type="binding site" evidence="1">
    <location>
        <position position="272"/>
    </location>
    <ligand>
        <name>substrate</name>
    </ligand>
</feature>
<feature type="modified residue" description="N6-acetyllysine" evidence="1">
    <location>
        <position position="267"/>
    </location>
</feature>
<evidence type="ECO:0000255" key="1">
    <source>
        <dbReference type="HAMAP-Rule" id="MF_01601"/>
    </source>
</evidence>
<name>HLDD_ECOBW</name>
<protein>
    <recommendedName>
        <fullName evidence="1">ADP-L-glycero-D-manno-heptose-6-epimerase</fullName>
        <ecNumber evidence="1">5.1.3.20</ecNumber>
    </recommendedName>
    <alternativeName>
        <fullName evidence="1">ADP-L-glycero-beta-D-manno-heptose-6-epimerase</fullName>
        <shortName evidence="1">ADP-glyceromanno-heptose 6-epimerase</shortName>
        <shortName evidence="1">ADP-hep 6-epimerase</shortName>
        <shortName evidence="1">AGME</shortName>
    </alternativeName>
</protein>
<keyword id="KW-0007">Acetylation</keyword>
<keyword id="KW-0119">Carbohydrate metabolism</keyword>
<keyword id="KW-0413">Isomerase</keyword>
<keyword id="KW-0521">NADP</keyword>
<sequence length="310" mass="34893">MIIVTGGAGFIGSNIVKALNDKGITDILVVDNLKDGTKFVNLVDLNIADYMDKEDFLIQIMAGEEFGDVEAIFHEGACSSTTEWDGKYMMDNNYQYSKELLHYCLEREIPFLYASSAATYGGRTSDFIESREYEKPLNVYGYSKFLFDEYVRQILPEANSQIVGFRYFNVYGPREGHKGSMASVAFHLNTQLNNGESPKLFEGSENFKRDFVYVGDVADVNLWFLENGVSGIFNLGTGRAESFQAVADATLAYHKKGQIEYIPFPDKLKGRYQAFTQADLTNLRAAGYDKPFKTVAEGVTEYMAWLNRDA</sequence>
<proteinExistence type="inferred from homology"/>
<accession>C4ZXL1</accession>
<dbReference type="EC" id="5.1.3.20" evidence="1"/>
<dbReference type="EMBL" id="CP001396">
    <property type="protein sequence ID" value="ACR61940.1"/>
    <property type="molecule type" value="Genomic_DNA"/>
</dbReference>
<dbReference type="SMR" id="C4ZXL1"/>
<dbReference type="KEGG" id="ebw:BWG_3310"/>
<dbReference type="HOGENOM" id="CLU_007383_1_3_6"/>
<dbReference type="UniPathway" id="UPA00356">
    <property type="reaction ID" value="UER00440"/>
</dbReference>
<dbReference type="GO" id="GO:0008712">
    <property type="term" value="F:ADP-glyceromanno-heptose 6-epimerase activity"/>
    <property type="evidence" value="ECO:0007669"/>
    <property type="project" value="UniProtKB-UniRule"/>
</dbReference>
<dbReference type="GO" id="GO:0050661">
    <property type="term" value="F:NADP binding"/>
    <property type="evidence" value="ECO:0007669"/>
    <property type="project" value="InterPro"/>
</dbReference>
<dbReference type="GO" id="GO:0097171">
    <property type="term" value="P:ADP-L-glycero-beta-D-manno-heptose biosynthetic process"/>
    <property type="evidence" value="ECO:0007669"/>
    <property type="project" value="UniProtKB-UniPathway"/>
</dbReference>
<dbReference type="GO" id="GO:0005975">
    <property type="term" value="P:carbohydrate metabolic process"/>
    <property type="evidence" value="ECO:0007669"/>
    <property type="project" value="UniProtKB-UniRule"/>
</dbReference>
<dbReference type="CDD" id="cd05248">
    <property type="entry name" value="ADP_GME_SDR_e"/>
    <property type="match status" value="1"/>
</dbReference>
<dbReference type="Gene3D" id="3.40.50.720">
    <property type="entry name" value="NAD(P)-binding Rossmann-like Domain"/>
    <property type="match status" value="1"/>
</dbReference>
<dbReference type="Gene3D" id="3.90.25.10">
    <property type="entry name" value="UDP-galactose 4-epimerase, domain 1"/>
    <property type="match status" value="1"/>
</dbReference>
<dbReference type="HAMAP" id="MF_01601">
    <property type="entry name" value="Heptose_epimerase"/>
    <property type="match status" value="1"/>
</dbReference>
<dbReference type="InterPro" id="IPR001509">
    <property type="entry name" value="Epimerase_deHydtase"/>
</dbReference>
<dbReference type="InterPro" id="IPR011912">
    <property type="entry name" value="Heptose_epim"/>
</dbReference>
<dbReference type="InterPro" id="IPR036291">
    <property type="entry name" value="NAD(P)-bd_dom_sf"/>
</dbReference>
<dbReference type="NCBIfam" id="TIGR02197">
    <property type="entry name" value="heptose_epim"/>
    <property type="match status" value="1"/>
</dbReference>
<dbReference type="NCBIfam" id="NF008360">
    <property type="entry name" value="PRK11150.1"/>
    <property type="match status" value="1"/>
</dbReference>
<dbReference type="PANTHER" id="PTHR43103:SF3">
    <property type="entry name" value="ADP-L-GLYCERO-D-MANNO-HEPTOSE-6-EPIMERASE"/>
    <property type="match status" value="1"/>
</dbReference>
<dbReference type="PANTHER" id="PTHR43103">
    <property type="entry name" value="NUCLEOSIDE-DIPHOSPHATE-SUGAR EPIMERASE"/>
    <property type="match status" value="1"/>
</dbReference>
<dbReference type="Pfam" id="PF01370">
    <property type="entry name" value="Epimerase"/>
    <property type="match status" value="1"/>
</dbReference>
<dbReference type="SUPFAM" id="SSF51735">
    <property type="entry name" value="NAD(P)-binding Rossmann-fold domains"/>
    <property type="match status" value="1"/>
</dbReference>
<comment type="function">
    <text evidence="1">Catalyzes the interconversion between ADP-D-glycero-beta-D-manno-heptose and ADP-L-glycero-beta-D-manno-heptose via an epimerization at carbon 6 of the heptose.</text>
</comment>
<comment type="catalytic activity">
    <reaction evidence="1">
        <text>ADP-D-glycero-beta-D-manno-heptose = ADP-L-glycero-beta-D-manno-heptose</text>
        <dbReference type="Rhea" id="RHEA:17577"/>
        <dbReference type="ChEBI" id="CHEBI:59967"/>
        <dbReference type="ChEBI" id="CHEBI:61506"/>
        <dbReference type="EC" id="5.1.3.20"/>
    </reaction>
</comment>
<comment type="cofactor">
    <cofactor evidence="1">
        <name>NADP(+)</name>
        <dbReference type="ChEBI" id="CHEBI:58349"/>
    </cofactor>
    <text evidence="1">Binds 1 NADP(+) per subunit.</text>
</comment>
<comment type="pathway">
    <text evidence="1">Nucleotide-sugar biosynthesis; ADP-L-glycero-beta-D-manno-heptose biosynthesis; ADP-L-glycero-beta-D-manno-heptose from D-glycero-beta-D-manno-heptose 7-phosphate: step 4/4.</text>
</comment>
<comment type="subunit">
    <text evidence="1">Homopentamer.</text>
</comment>
<comment type="domain">
    <text evidence="1">Contains a large N-terminal NADP-binding domain, and a smaller C-terminal substrate-binding domain.</text>
</comment>
<comment type="similarity">
    <text evidence="1">Belongs to the NAD(P)-dependent epimerase/dehydratase family. HldD subfamily.</text>
</comment>
<organism>
    <name type="scientific">Escherichia coli (strain K12 / MC4100 / BW2952)</name>
    <dbReference type="NCBI Taxonomy" id="595496"/>
    <lineage>
        <taxon>Bacteria</taxon>
        <taxon>Pseudomonadati</taxon>
        <taxon>Pseudomonadota</taxon>
        <taxon>Gammaproteobacteria</taxon>
        <taxon>Enterobacterales</taxon>
        <taxon>Enterobacteriaceae</taxon>
        <taxon>Escherichia</taxon>
    </lineage>
</organism>
<gene>
    <name evidence="1" type="primary">hldD</name>
    <name type="ordered locus">BWG_3310</name>
</gene>
<reference key="1">
    <citation type="journal article" date="2009" name="J. Bacteriol.">
        <title>Genomic sequencing reveals regulatory mutations and recombinational events in the widely used MC4100 lineage of Escherichia coli K-12.</title>
        <authorList>
            <person name="Ferenci T."/>
            <person name="Zhou Z."/>
            <person name="Betteridge T."/>
            <person name="Ren Y."/>
            <person name="Liu Y."/>
            <person name="Feng L."/>
            <person name="Reeves P.R."/>
            <person name="Wang L."/>
        </authorList>
    </citation>
    <scope>NUCLEOTIDE SEQUENCE [LARGE SCALE GENOMIC DNA]</scope>
    <source>
        <strain>K12 / MC4100 / BW2952</strain>
    </source>
</reference>